<comment type="function">
    <text evidence="1">Catalyzes carboxymethyl transfer from carboxy-S-adenosyl-L-methionine (Cx-SAM) to 5-hydroxyuridine (ho5U) to form 5-carboxymethoxyuridine (cmo5U) at position 34 in tRNAs.</text>
</comment>
<comment type="catalytic activity">
    <reaction evidence="1">
        <text>carboxy-S-adenosyl-L-methionine + 5-hydroxyuridine(34) in tRNA = 5-carboxymethoxyuridine(34) in tRNA + S-adenosyl-L-homocysteine + H(+)</text>
        <dbReference type="Rhea" id="RHEA:52848"/>
        <dbReference type="Rhea" id="RHEA-COMP:13381"/>
        <dbReference type="Rhea" id="RHEA-COMP:13383"/>
        <dbReference type="ChEBI" id="CHEBI:15378"/>
        <dbReference type="ChEBI" id="CHEBI:57856"/>
        <dbReference type="ChEBI" id="CHEBI:134278"/>
        <dbReference type="ChEBI" id="CHEBI:136877"/>
        <dbReference type="ChEBI" id="CHEBI:136879"/>
    </reaction>
</comment>
<comment type="subunit">
    <text evidence="1">Homotetramer.</text>
</comment>
<comment type="similarity">
    <text evidence="1">Belongs to the class I-like SAM-binding methyltransferase superfamily. CmoB family.</text>
</comment>
<evidence type="ECO:0000255" key="1">
    <source>
        <dbReference type="HAMAP-Rule" id="MF_01590"/>
    </source>
</evidence>
<organism>
    <name type="scientific">Cellvibrio japonicus (strain Ueda107)</name>
    <name type="common">Pseudomonas fluorescens subsp. cellulosa</name>
    <dbReference type="NCBI Taxonomy" id="498211"/>
    <lineage>
        <taxon>Bacteria</taxon>
        <taxon>Pseudomonadati</taxon>
        <taxon>Pseudomonadota</taxon>
        <taxon>Gammaproteobacteria</taxon>
        <taxon>Cellvibrionales</taxon>
        <taxon>Cellvibrionaceae</taxon>
        <taxon>Cellvibrio</taxon>
    </lineage>
</organism>
<gene>
    <name evidence="1" type="primary">cmoB</name>
    <name type="ordered locus">CJA_1805</name>
</gene>
<sequence>MNYSALLDAISQGPLARWASILPEQIAEGLSEERYGDLPAWKTVLAQLPAITSSHTELAERVSIGAPGDCDETTREQLQSVLEALIPWRKGPYWIHGIHLDTEWRSDWKWDRVLPHLASLKDRLILDVGCGNGYHCWRMLGAGAKRVIGIDPSPRFVVQFHMIKQLAGLHYPVDVLPVGIEDLPEKLHAFDTVFSMGVFYHRRAPMDHLLELKNALRPGGQLVLETLVINGKEGDVLVPEGRYAMMNNVWFLPSCATLLSWLRKMGFKAPRVVDICPTTTEEQRSTHWMRFHSLPEFLHPENPALTAEGHPAPIRAVFVAEV</sequence>
<feature type="chain" id="PRO_0000381854" description="tRNA U34 carboxymethyltransferase">
    <location>
        <begin position="1"/>
        <end position="322"/>
    </location>
</feature>
<feature type="binding site" evidence="1">
    <location>
        <position position="90"/>
    </location>
    <ligand>
        <name>carboxy-S-adenosyl-L-methionine</name>
        <dbReference type="ChEBI" id="CHEBI:134278"/>
    </ligand>
</feature>
<feature type="binding site" evidence="1">
    <location>
        <position position="104"/>
    </location>
    <ligand>
        <name>carboxy-S-adenosyl-L-methionine</name>
        <dbReference type="ChEBI" id="CHEBI:134278"/>
    </ligand>
</feature>
<feature type="binding site" evidence="1">
    <location>
        <position position="109"/>
    </location>
    <ligand>
        <name>carboxy-S-adenosyl-L-methionine</name>
        <dbReference type="ChEBI" id="CHEBI:134278"/>
    </ligand>
</feature>
<feature type="binding site" evidence="1">
    <location>
        <position position="129"/>
    </location>
    <ligand>
        <name>carboxy-S-adenosyl-L-methionine</name>
        <dbReference type="ChEBI" id="CHEBI:134278"/>
    </ligand>
</feature>
<feature type="binding site" evidence="1">
    <location>
        <begin position="151"/>
        <end position="153"/>
    </location>
    <ligand>
        <name>carboxy-S-adenosyl-L-methionine</name>
        <dbReference type="ChEBI" id="CHEBI:134278"/>
    </ligand>
</feature>
<feature type="binding site" evidence="1">
    <location>
        <begin position="180"/>
        <end position="181"/>
    </location>
    <ligand>
        <name>carboxy-S-adenosyl-L-methionine</name>
        <dbReference type="ChEBI" id="CHEBI:134278"/>
    </ligand>
</feature>
<feature type="binding site" evidence="1">
    <location>
        <position position="196"/>
    </location>
    <ligand>
        <name>carboxy-S-adenosyl-L-methionine</name>
        <dbReference type="ChEBI" id="CHEBI:134278"/>
    </ligand>
</feature>
<feature type="binding site" evidence="1">
    <location>
        <position position="200"/>
    </location>
    <ligand>
        <name>carboxy-S-adenosyl-L-methionine</name>
        <dbReference type="ChEBI" id="CHEBI:134278"/>
    </ligand>
</feature>
<feature type="binding site" evidence="1">
    <location>
        <position position="315"/>
    </location>
    <ligand>
        <name>carboxy-S-adenosyl-L-methionine</name>
        <dbReference type="ChEBI" id="CHEBI:134278"/>
    </ligand>
</feature>
<name>CMOB_CELJU</name>
<keyword id="KW-1185">Reference proteome</keyword>
<keyword id="KW-0808">Transferase</keyword>
<keyword id="KW-0819">tRNA processing</keyword>
<proteinExistence type="inferred from homology"/>
<protein>
    <recommendedName>
        <fullName evidence="1">tRNA U34 carboxymethyltransferase</fullName>
        <ecNumber evidence="1">2.5.1.-</ecNumber>
    </recommendedName>
</protein>
<reference key="1">
    <citation type="journal article" date="2008" name="J. Bacteriol.">
        <title>Insights into plant cell wall degradation from the genome sequence of the soil bacterium Cellvibrio japonicus.</title>
        <authorList>
            <person name="DeBoy R.T."/>
            <person name="Mongodin E.F."/>
            <person name="Fouts D.E."/>
            <person name="Tailford L.E."/>
            <person name="Khouri H."/>
            <person name="Emerson J.B."/>
            <person name="Mohamoud Y."/>
            <person name="Watkins K."/>
            <person name="Henrissat B."/>
            <person name="Gilbert H.J."/>
            <person name="Nelson K.E."/>
        </authorList>
    </citation>
    <scope>NUCLEOTIDE SEQUENCE [LARGE SCALE GENOMIC DNA]</scope>
    <source>
        <strain>Ueda107</strain>
    </source>
</reference>
<dbReference type="EC" id="2.5.1.-" evidence="1"/>
<dbReference type="EMBL" id="CP000934">
    <property type="protein sequence ID" value="ACE83317.1"/>
    <property type="molecule type" value="Genomic_DNA"/>
</dbReference>
<dbReference type="RefSeq" id="WP_012487424.1">
    <property type="nucleotide sequence ID" value="NC_010995.1"/>
</dbReference>
<dbReference type="SMR" id="B3PFU1"/>
<dbReference type="STRING" id="498211.CJA_1805"/>
<dbReference type="KEGG" id="cja:CJA_1805"/>
<dbReference type="eggNOG" id="COG0500">
    <property type="taxonomic scope" value="Bacteria"/>
</dbReference>
<dbReference type="HOGENOM" id="CLU_052665_0_0_6"/>
<dbReference type="OrthoDB" id="9773188at2"/>
<dbReference type="Proteomes" id="UP000001036">
    <property type="component" value="Chromosome"/>
</dbReference>
<dbReference type="GO" id="GO:0008168">
    <property type="term" value="F:methyltransferase activity"/>
    <property type="evidence" value="ECO:0007669"/>
    <property type="project" value="TreeGrafter"/>
</dbReference>
<dbReference type="GO" id="GO:0016765">
    <property type="term" value="F:transferase activity, transferring alkyl or aryl (other than methyl) groups"/>
    <property type="evidence" value="ECO:0007669"/>
    <property type="project" value="UniProtKB-UniRule"/>
</dbReference>
<dbReference type="GO" id="GO:0002098">
    <property type="term" value="P:tRNA wobble uridine modification"/>
    <property type="evidence" value="ECO:0007669"/>
    <property type="project" value="InterPro"/>
</dbReference>
<dbReference type="CDD" id="cd02440">
    <property type="entry name" value="AdoMet_MTases"/>
    <property type="match status" value="1"/>
</dbReference>
<dbReference type="Gene3D" id="3.40.50.150">
    <property type="entry name" value="Vaccinia Virus protein VP39"/>
    <property type="match status" value="1"/>
</dbReference>
<dbReference type="HAMAP" id="MF_01590">
    <property type="entry name" value="tRNA_carboxymethyltr_CmoB"/>
    <property type="match status" value="1"/>
</dbReference>
<dbReference type="InterPro" id="IPR010017">
    <property type="entry name" value="CmoB"/>
</dbReference>
<dbReference type="InterPro" id="IPR027555">
    <property type="entry name" value="Mo5U34_MeTrfas-like"/>
</dbReference>
<dbReference type="InterPro" id="IPR029063">
    <property type="entry name" value="SAM-dependent_MTases_sf"/>
</dbReference>
<dbReference type="NCBIfam" id="NF011650">
    <property type="entry name" value="PRK15068.1"/>
    <property type="match status" value="1"/>
</dbReference>
<dbReference type="NCBIfam" id="TIGR00452">
    <property type="entry name" value="tRNA 5-methoxyuridine(34)/uridine 5-oxyacetic acid(34) synthase CmoB"/>
    <property type="match status" value="1"/>
</dbReference>
<dbReference type="PANTHER" id="PTHR43464">
    <property type="entry name" value="METHYLTRANSFERASE"/>
    <property type="match status" value="1"/>
</dbReference>
<dbReference type="PANTHER" id="PTHR43464:SF95">
    <property type="entry name" value="TRNA U34 CARBOXYMETHYLTRANSFERASE"/>
    <property type="match status" value="1"/>
</dbReference>
<dbReference type="Pfam" id="PF08003">
    <property type="entry name" value="Methyltransf_9"/>
    <property type="match status" value="1"/>
</dbReference>
<dbReference type="SUPFAM" id="SSF53335">
    <property type="entry name" value="S-adenosyl-L-methionine-dependent methyltransferases"/>
    <property type="match status" value="1"/>
</dbReference>
<accession>B3PFU1</accession>